<proteinExistence type="inferred from homology"/>
<accession>Q62IN6</accession>
<reference key="1">
    <citation type="journal article" date="2004" name="Proc. Natl. Acad. Sci. U.S.A.">
        <title>Structural flexibility in the Burkholderia mallei genome.</title>
        <authorList>
            <person name="Nierman W.C."/>
            <person name="DeShazer D."/>
            <person name="Kim H.S."/>
            <person name="Tettelin H."/>
            <person name="Nelson K.E."/>
            <person name="Feldblyum T.V."/>
            <person name="Ulrich R.L."/>
            <person name="Ronning C.M."/>
            <person name="Brinkac L.M."/>
            <person name="Daugherty S.C."/>
            <person name="Davidsen T.D."/>
            <person name="DeBoy R.T."/>
            <person name="Dimitrov G."/>
            <person name="Dodson R.J."/>
            <person name="Durkin A.S."/>
            <person name="Gwinn M.L."/>
            <person name="Haft D.H."/>
            <person name="Khouri H.M."/>
            <person name="Kolonay J.F."/>
            <person name="Madupu R."/>
            <person name="Mohammoud Y."/>
            <person name="Nelson W.C."/>
            <person name="Radune D."/>
            <person name="Romero C.M."/>
            <person name="Sarria S."/>
            <person name="Selengut J."/>
            <person name="Shamblin C."/>
            <person name="Sullivan S.A."/>
            <person name="White O."/>
            <person name="Yu Y."/>
            <person name="Zafar N."/>
            <person name="Zhou L."/>
            <person name="Fraser C.M."/>
        </authorList>
    </citation>
    <scope>NUCLEOTIDE SEQUENCE [LARGE SCALE GENOMIC DNA]</scope>
    <source>
        <strain>ATCC 23344</strain>
    </source>
</reference>
<organism>
    <name type="scientific">Burkholderia mallei (strain ATCC 23344)</name>
    <dbReference type="NCBI Taxonomy" id="243160"/>
    <lineage>
        <taxon>Bacteria</taxon>
        <taxon>Pseudomonadati</taxon>
        <taxon>Pseudomonadota</taxon>
        <taxon>Betaproteobacteria</taxon>
        <taxon>Burkholderiales</taxon>
        <taxon>Burkholderiaceae</taxon>
        <taxon>Burkholderia</taxon>
        <taxon>pseudomallei group</taxon>
    </lineage>
</organism>
<keyword id="KW-0004">4Fe-4S</keyword>
<keyword id="KW-0997">Cell inner membrane</keyword>
<keyword id="KW-1003">Cell membrane</keyword>
<keyword id="KW-0408">Iron</keyword>
<keyword id="KW-0411">Iron-sulfur</keyword>
<keyword id="KW-0472">Membrane</keyword>
<keyword id="KW-0479">Metal-binding</keyword>
<keyword id="KW-0520">NAD</keyword>
<keyword id="KW-0874">Quinone</keyword>
<keyword id="KW-1185">Reference proteome</keyword>
<keyword id="KW-1278">Translocase</keyword>
<keyword id="KW-0813">Transport</keyword>
<keyword id="KW-0830">Ubiquinone</keyword>
<evidence type="ECO:0000250" key="1"/>
<evidence type="ECO:0000255" key="2">
    <source>
        <dbReference type="HAMAP-Rule" id="MF_01356"/>
    </source>
</evidence>
<evidence type="ECO:0000305" key="3"/>
<gene>
    <name evidence="2" type="primary">nuoB1</name>
    <name type="ordered locus">BMA1828</name>
</gene>
<protein>
    <recommendedName>
        <fullName evidence="2">NADH-quinone oxidoreductase subunit B 1</fullName>
        <ecNumber evidence="2">7.1.1.-</ecNumber>
    </recommendedName>
    <alternativeName>
        <fullName evidence="2">NADH dehydrogenase I subunit B 1</fullName>
    </alternativeName>
    <alternativeName>
        <fullName evidence="2">NDH-1 subunit B 1</fullName>
    </alternativeName>
</protein>
<name>NUOB1_BURMA</name>
<sequence>MSIEGVLKEGFVTTTADKLINWTRTGSLWPMTFGLACCAVEMMHAGAARYDLDRFGVVFRPSPRQSDVMIVAGTLCNKMAPALRRVYDQMAEPRWVISMGSCANGGGYYHYSYSVVRGCDRIVPVDVYVPGCPPTAEALVYGVIQLQAKIRRTSTIARQ</sequence>
<dbReference type="EC" id="7.1.1.-" evidence="2"/>
<dbReference type="EMBL" id="CP000010">
    <property type="protein sequence ID" value="AAU49834.1"/>
    <property type="status" value="ALT_INIT"/>
    <property type="molecule type" value="Genomic_DNA"/>
</dbReference>
<dbReference type="RefSeq" id="WP_004186402.1">
    <property type="nucleotide sequence ID" value="NC_006348.1"/>
</dbReference>
<dbReference type="RefSeq" id="YP_103433.1">
    <property type="nucleotide sequence ID" value="NC_006348.1"/>
</dbReference>
<dbReference type="SMR" id="Q62IN6"/>
<dbReference type="KEGG" id="bma:BMA1828"/>
<dbReference type="PATRIC" id="fig|243160.12.peg.1866"/>
<dbReference type="eggNOG" id="COG0377">
    <property type="taxonomic scope" value="Bacteria"/>
</dbReference>
<dbReference type="HOGENOM" id="CLU_055737_7_3_4"/>
<dbReference type="Proteomes" id="UP000006693">
    <property type="component" value="Chromosome 1"/>
</dbReference>
<dbReference type="GO" id="GO:0005886">
    <property type="term" value="C:plasma membrane"/>
    <property type="evidence" value="ECO:0007669"/>
    <property type="project" value="UniProtKB-SubCell"/>
</dbReference>
<dbReference type="GO" id="GO:0045271">
    <property type="term" value="C:respiratory chain complex I"/>
    <property type="evidence" value="ECO:0007669"/>
    <property type="project" value="TreeGrafter"/>
</dbReference>
<dbReference type="GO" id="GO:0051539">
    <property type="term" value="F:4 iron, 4 sulfur cluster binding"/>
    <property type="evidence" value="ECO:0007669"/>
    <property type="project" value="UniProtKB-KW"/>
</dbReference>
<dbReference type="GO" id="GO:0005506">
    <property type="term" value="F:iron ion binding"/>
    <property type="evidence" value="ECO:0007669"/>
    <property type="project" value="UniProtKB-UniRule"/>
</dbReference>
<dbReference type="GO" id="GO:0008137">
    <property type="term" value="F:NADH dehydrogenase (ubiquinone) activity"/>
    <property type="evidence" value="ECO:0007669"/>
    <property type="project" value="InterPro"/>
</dbReference>
<dbReference type="GO" id="GO:0050136">
    <property type="term" value="F:NADH:ubiquinone reductase (non-electrogenic) activity"/>
    <property type="evidence" value="ECO:0007669"/>
    <property type="project" value="UniProtKB-UniRule"/>
</dbReference>
<dbReference type="GO" id="GO:0048038">
    <property type="term" value="F:quinone binding"/>
    <property type="evidence" value="ECO:0007669"/>
    <property type="project" value="UniProtKB-KW"/>
</dbReference>
<dbReference type="GO" id="GO:0009060">
    <property type="term" value="P:aerobic respiration"/>
    <property type="evidence" value="ECO:0007669"/>
    <property type="project" value="TreeGrafter"/>
</dbReference>
<dbReference type="GO" id="GO:0015990">
    <property type="term" value="P:electron transport coupled proton transport"/>
    <property type="evidence" value="ECO:0007669"/>
    <property type="project" value="TreeGrafter"/>
</dbReference>
<dbReference type="FunFam" id="3.40.50.12280:FF:000001">
    <property type="entry name" value="NADH-quinone oxidoreductase subunit B 2"/>
    <property type="match status" value="1"/>
</dbReference>
<dbReference type="Gene3D" id="3.40.50.12280">
    <property type="match status" value="1"/>
</dbReference>
<dbReference type="HAMAP" id="MF_01356">
    <property type="entry name" value="NDH1_NuoB"/>
    <property type="match status" value="1"/>
</dbReference>
<dbReference type="InterPro" id="IPR006137">
    <property type="entry name" value="NADH_UbQ_OxRdtase-like_20kDa"/>
</dbReference>
<dbReference type="InterPro" id="IPR006138">
    <property type="entry name" value="NADH_UQ_OxRdtase_20Kd_su"/>
</dbReference>
<dbReference type="NCBIfam" id="TIGR01957">
    <property type="entry name" value="nuoB_fam"/>
    <property type="match status" value="1"/>
</dbReference>
<dbReference type="NCBIfam" id="NF005012">
    <property type="entry name" value="PRK06411.1"/>
    <property type="match status" value="1"/>
</dbReference>
<dbReference type="PANTHER" id="PTHR11995">
    <property type="entry name" value="NADH DEHYDROGENASE"/>
    <property type="match status" value="1"/>
</dbReference>
<dbReference type="PANTHER" id="PTHR11995:SF14">
    <property type="entry name" value="NADH DEHYDROGENASE [UBIQUINONE] IRON-SULFUR PROTEIN 7, MITOCHONDRIAL"/>
    <property type="match status" value="1"/>
</dbReference>
<dbReference type="Pfam" id="PF01058">
    <property type="entry name" value="Oxidored_q6"/>
    <property type="match status" value="1"/>
</dbReference>
<dbReference type="SUPFAM" id="SSF56770">
    <property type="entry name" value="HydA/Nqo6-like"/>
    <property type="match status" value="1"/>
</dbReference>
<dbReference type="PROSITE" id="PS01150">
    <property type="entry name" value="COMPLEX1_20K"/>
    <property type="match status" value="1"/>
</dbReference>
<comment type="function">
    <text evidence="1">NDH-1 shuttles electrons from NADH, via FMN and iron-sulfur (Fe-S) centers, to quinones in the respiratory chain. Couples the redox reaction to proton translocation (for every two electrons transferred, four hydrogen ions are translocated across the cytoplasmic membrane), and thus conserves the redox energy in a proton gradient (By similarity).</text>
</comment>
<comment type="catalytic activity">
    <reaction evidence="2">
        <text>a quinone + NADH + 5 H(+)(in) = a quinol + NAD(+) + 4 H(+)(out)</text>
        <dbReference type="Rhea" id="RHEA:57888"/>
        <dbReference type="ChEBI" id="CHEBI:15378"/>
        <dbReference type="ChEBI" id="CHEBI:24646"/>
        <dbReference type="ChEBI" id="CHEBI:57540"/>
        <dbReference type="ChEBI" id="CHEBI:57945"/>
        <dbReference type="ChEBI" id="CHEBI:132124"/>
    </reaction>
</comment>
<comment type="cofactor">
    <cofactor evidence="2">
        <name>[4Fe-4S] cluster</name>
        <dbReference type="ChEBI" id="CHEBI:49883"/>
    </cofactor>
    <text evidence="2">Binds 1 [4Fe-4S] cluster.</text>
</comment>
<comment type="subunit">
    <text evidence="2">NDH-1 is composed of 14 different subunits. Subunits NuoB, C, D, E, F, and G constitute the peripheral sector of the complex.</text>
</comment>
<comment type="subcellular location">
    <subcellularLocation>
        <location evidence="2">Cell inner membrane</location>
        <topology evidence="2">Peripheral membrane protein</topology>
        <orientation evidence="2">Cytoplasmic side</orientation>
    </subcellularLocation>
</comment>
<comment type="similarity">
    <text evidence="2">Belongs to the complex I 20 kDa subunit family.</text>
</comment>
<comment type="sequence caution" evidence="3">
    <conflict type="erroneous initiation">
        <sequence resource="EMBL-CDS" id="AAU49834"/>
    </conflict>
</comment>
<feature type="chain" id="PRO_0000358369" description="NADH-quinone oxidoreductase subunit B 1">
    <location>
        <begin position="1"/>
        <end position="159"/>
    </location>
</feature>
<feature type="binding site" evidence="2">
    <location>
        <position position="37"/>
    </location>
    <ligand>
        <name>[4Fe-4S] cluster</name>
        <dbReference type="ChEBI" id="CHEBI:49883"/>
    </ligand>
</feature>
<feature type="binding site" evidence="2">
    <location>
        <position position="38"/>
    </location>
    <ligand>
        <name>[4Fe-4S] cluster</name>
        <dbReference type="ChEBI" id="CHEBI:49883"/>
    </ligand>
</feature>
<feature type="binding site" evidence="2">
    <location>
        <position position="102"/>
    </location>
    <ligand>
        <name>[4Fe-4S] cluster</name>
        <dbReference type="ChEBI" id="CHEBI:49883"/>
    </ligand>
</feature>
<feature type="binding site" evidence="2">
    <location>
        <position position="132"/>
    </location>
    <ligand>
        <name>[4Fe-4S] cluster</name>
        <dbReference type="ChEBI" id="CHEBI:49883"/>
    </ligand>
</feature>